<comment type="function">
    <text evidence="1">Component of antiviral defense system Lamassu type I, composed of LmuA and LmuB. Expression of Lamassu type I in B.subtilis (strain BEST7003) confers resistance to phages phi3T, SpBeta and SPR.</text>
</comment>
<comment type="disruption phenotype">
    <text evidence="1">When this gene is missing the Lamassu type I system does not confer resistance to SpBeta in B.subtilis.</text>
</comment>
<evidence type="ECO:0000269" key="1">
    <source>
    </source>
</evidence>
<evidence type="ECO:0000303" key="2">
    <source>
    </source>
</evidence>
<accession>P0DW43</accession>
<feature type="chain" id="PRO_0000456376" description="Lamassu protein LmuA">
    <location>
        <begin position="1"/>
        <end position="315"/>
    </location>
</feature>
<sequence length="315" mass="36058">MIEIDNGGAIALKGFNYQKASIILVMIHNFEKDNFIVIPESQEDFEIHLGQDTYFIQVKGTKKLSIGKLKSRPSGKASIIEKNLSPGNVGDIRKIFLWDIAELTKNELISQEGTLIPMKHSLSLKQKTEIINTLDLDEEQKNRMNNQYIYITPFPNDINLALTFLKGEMVNENLLVSNDRAKLVLGELSLEIDRKSEIVVSTESDVERKKIDGNYLKQVFINIKQKEMFDEILDNLSINTIMKKKVKKEKLRIPLLYQNIKEQTKQKADINLLMRENDEGAINYLRDLLVEIVPDMKPTELSIALAIDCFCELGE</sequence>
<proteinExistence type="predicted"/>
<reference key="1">
    <citation type="submission" date="2015-11" db="EMBL/GenBank/DDBJ databases">
        <authorList>
            <person name="Dastager S.G."/>
            <person name="Mawlankar R.B."/>
            <person name="Thorat M.N."/>
            <person name="Jiao J.-Y."/>
            <person name="Sonalkar V."/>
            <person name="Li W.-J."/>
        </authorList>
    </citation>
    <scope>NUCLEOTIDE SEQUENCE [LARGE SCALE GENOMIC DNA]</scope>
    <source>
        <strain>NCIM 5461 / CCTCC AB 2011126 / NIO-1130</strain>
    </source>
</reference>
<reference key="2">
    <citation type="journal article" date="2018" name="Science">
        <title>Systematic discovery of antiphage defense systems in the microbial pangenome.</title>
        <authorList>
            <person name="Doron S."/>
            <person name="Melamed S."/>
            <person name="Ofir G."/>
            <person name="Leavitt A."/>
            <person name="Lopatina A."/>
            <person name="Keren M."/>
            <person name="Amitai G."/>
            <person name="Sorek R."/>
        </authorList>
    </citation>
    <scope>FUNCTION</scope>
    <scope>DISRUPTION PHENOTYPE</scope>
    <scope>EXPRESSION IN B.SUBTILIS</scope>
    <source>
        <strain>NCIM 5461 / CCTCC AB 2011126 / NIO-1130</strain>
    </source>
</reference>
<gene>
    <name evidence="2" type="primary">lmuA</name>
    <name type="ORF">AS035_15080</name>
</gene>
<name>LMUA_BACX1</name>
<dbReference type="EMBL" id="LNQK01000012">
    <property type="protein sequence ID" value="KSU69241.1"/>
    <property type="molecule type" value="Genomic_DNA"/>
</dbReference>
<dbReference type="GO" id="GO:0004518">
    <property type="term" value="F:nuclease activity"/>
    <property type="evidence" value="ECO:0007669"/>
    <property type="project" value="InterPro"/>
</dbReference>
<dbReference type="GO" id="GO:0051607">
    <property type="term" value="P:defense response to virus"/>
    <property type="evidence" value="ECO:0007669"/>
    <property type="project" value="UniProtKB-KW"/>
</dbReference>
<dbReference type="InterPro" id="IPR025382">
    <property type="entry name" value="Cap4-like_endonuclease_dom"/>
</dbReference>
<dbReference type="Pfam" id="PF14130">
    <property type="entry name" value="Cap4_nuclease"/>
    <property type="match status" value="1"/>
</dbReference>
<protein>
    <recommendedName>
        <fullName evidence="2">Lamassu protein LmuA</fullName>
    </recommendedName>
</protein>
<keyword id="KW-0051">Antiviral defense</keyword>
<organism>
    <name type="scientific">Bacillus sp. (strain NCIM 5461 / CCTCC AB 2011126 / NIO-1130)</name>
    <dbReference type="NCBI Taxonomy" id="1761765"/>
    <lineage>
        <taxon>Bacteria</taxon>
        <taxon>Bacillati</taxon>
        <taxon>Bacillota</taxon>
        <taxon>Bacilli</taxon>
        <taxon>Bacillales</taxon>
        <taxon>Bacillaceae</taxon>
        <taxon>Bacillus</taxon>
    </lineage>
</organism>